<sequence length="352" mass="38400">MSGNTFGALFTVTTFGESHGPAIGCVVDGCPPGMSLTEADIQPFLDKRKPGQSKYTTQRREEDKVQILSGVFDGKTTGAPIALLIQNTDQRSRDYEDIKNLFRPGHADFTYHYKYGHRDYRGGGRSSARETAARVAAGAIARLYLKRYLNLDIIGYLQQMGDLKLQFENENEINKNPFFCPNNKQIQELADYVDRLRRQGDSVGARVKILARGVPTGLGDPVFDKLDATLAYAMMSINAVKGVEIGAGFNAVEQLGSHHRDQMTAKGFLSNHAGGILGGIATGQPIEVSIALKPTSSITTPGQTINTEGEEVTVVTKGRHDPCVGIRAVPIAEAMMALVLMDHYLRHKAQCK</sequence>
<gene>
    <name evidence="1" type="primary">aroC</name>
    <name type="ordered locus">LPC_1768</name>
</gene>
<dbReference type="EC" id="4.2.3.5" evidence="1"/>
<dbReference type="EMBL" id="CP000675">
    <property type="protein sequence ID" value="ABQ55701.1"/>
    <property type="molecule type" value="Genomic_DNA"/>
</dbReference>
<dbReference type="RefSeq" id="WP_010948009.1">
    <property type="nucleotide sequence ID" value="NC_009494.2"/>
</dbReference>
<dbReference type="SMR" id="A5IEA1"/>
<dbReference type="GeneID" id="57036294"/>
<dbReference type="KEGG" id="lpc:LPC_1768"/>
<dbReference type="HOGENOM" id="CLU_034547_0_2_6"/>
<dbReference type="UniPathway" id="UPA00053">
    <property type="reaction ID" value="UER00090"/>
</dbReference>
<dbReference type="GO" id="GO:0005829">
    <property type="term" value="C:cytosol"/>
    <property type="evidence" value="ECO:0007669"/>
    <property type="project" value="TreeGrafter"/>
</dbReference>
<dbReference type="GO" id="GO:0004107">
    <property type="term" value="F:chorismate synthase activity"/>
    <property type="evidence" value="ECO:0007669"/>
    <property type="project" value="UniProtKB-UniRule"/>
</dbReference>
<dbReference type="GO" id="GO:0010181">
    <property type="term" value="F:FMN binding"/>
    <property type="evidence" value="ECO:0007669"/>
    <property type="project" value="TreeGrafter"/>
</dbReference>
<dbReference type="GO" id="GO:0008652">
    <property type="term" value="P:amino acid biosynthetic process"/>
    <property type="evidence" value="ECO:0007669"/>
    <property type="project" value="UniProtKB-KW"/>
</dbReference>
<dbReference type="GO" id="GO:0009073">
    <property type="term" value="P:aromatic amino acid family biosynthetic process"/>
    <property type="evidence" value="ECO:0007669"/>
    <property type="project" value="UniProtKB-KW"/>
</dbReference>
<dbReference type="GO" id="GO:0009423">
    <property type="term" value="P:chorismate biosynthetic process"/>
    <property type="evidence" value="ECO:0007669"/>
    <property type="project" value="UniProtKB-UniRule"/>
</dbReference>
<dbReference type="CDD" id="cd07304">
    <property type="entry name" value="Chorismate_synthase"/>
    <property type="match status" value="1"/>
</dbReference>
<dbReference type="FunFam" id="3.60.150.10:FF:000001">
    <property type="entry name" value="Chorismate synthase"/>
    <property type="match status" value="1"/>
</dbReference>
<dbReference type="Gene3D" id="3.60.150.10">
    <property type="entry name" value="Chorismate synthase AroC"/>
    <property type="match status" value="1"/>
</dbReference>
<dbReference type="HAMAP" id="MF_00300">
    <property type="entry name" value="Chorismate_synth"/>
    <property type="match status" value="1"/>
</dbReference>
<dbReference type="InterPro" id="IPR000453">
    <property type="entry name" value="Chorismate_synth"/>
</dbReference>
<dbReference type="InterPro" id="IPR035904">
    <property type="entry name" value="Chorismate_synth_AroC_sf"/>
</dbReference>
<dbReference type="InterPro" id="IPR020541">
    <property type="entry name" value="Chorismate_synthase_CS"/>
</dbReference>
<dbReference type="NCBIfam" id="TIGR00033">
    <property type="entry name" value="aroC"/>
    <property type="match status" value="1"/>
</dbReference>
<dbReference type="NCBIfam" id="NF003793">
    <property type="entry name" value="PRK05382.1"/>
    <property type="match status" value="1"/>
</dbReference>
<dbReference type="PANTHER" id="PTHR21085">
    <property type="entry name" value="CHORISMATE SYNTHASE"/>
    <property type="match status" value="1"/>
</dbReference>
<dbReference type="PANTHER" id="PTHR21085:SF0">
    <property type="entry name" value="CHORISMATE SYNTHASE"/>
    <property type="match status" value="1"/>
</dbReference>
<dbReference type="Pfam" id="PF01264">
    <property type="entry name" value="Chorismate_synt"/>
    <property type="match status" value="1"/>
</dbReference>
<dbReference type="PIRSF" id="PIRSF001456">
    <property type="entry name" value="Chorismate_synth"/>
    <property type="match status" value="1"/>
</dbReference>
<dbReference type="SUPFAM" id="SSF103263">
    <property type="entry name" value="Chorismate synthase, AroC"/>
    <property type="match status" value="1"/>
</dbReference>
<dbReference type="PROSITE" id="PS00787">
    <property type="entry name" value="CHORISMATE_SYNTHASE_1"/>
    <property type="match status" value="1"/>
</dbReference>
<dbReference type="PROSITE" id="PS00788">
    <property type="entry name" value="CHORISMATE_SYNTHASE_2"/>
    <property type="match status" value="1"/>
</dbReference>
<dbReference type="PROSITE" id="PS00789">
    <property type="entry name" value="CHORISMATE_SYNTHASE_3"/>
    <property type="match status" value="1"/>
</dbReference>
<keyword id="KW-0028">Amino-acid biosynthesis</keyword>
<keyword id="KW-0057">Aromatic amino acid biosynthesis</keyword>
<keyword id="KW-0274">FAD</keyword>
<keyword id="KW-0285">Flavoprotein</keyword>
<keyword id="KW-0288">FMN</keyword>
<keyword id="KW-0456">Lyase</keyword>
<keyword id="KW-0521">NADP</keyword>
<comment type="function">
    <text evidence="1">Catalyzes the anti-1,4-elimination of the C-3 phosphate and the C-6 proR hydrogen from 5-enolpyruvylshikimate-3-phosphate (EPSP) to yield chorismate, which is the branch point compound that serves as the starting substrate for the three terminal pathways of aromatic amino acid biosynthesis. This reaction introduces a second double bond into the aromatic ring system.</text>
</comment>
<comment type="catalytic activity">
    <reaction evidence="1">
        <text>5-O-(1-carboxyvinyl)-3-phosphoshikimate = chorismate + phosphate</text>
        <dbReference type="Rhea" id="RHEA:21020"/>
        <dbReference type="ChEBI" id="CHEBI:29748"/>
        <dbReference type="ChEBI" id="CHEBI:43474"/>
        <dbReference type="ChEBI" id="CHEBI:57701"/>
        <dbReference type="EC" id="4.2.3.5"/>
    </reaction>
</comment>
<comment type="cofactor">
    <cofactor evidence="1">
        <name>FMNH2</name>
        <dbReference type="ChEBI" id="CHEBI:57618"/>
    </cofactor>
    <text evidence="1">Reduced FMN (FMNH(2)).</text>
</comment>
<comment type="pathway">
    <text evidence="1">Metabolic intermediate biosynthesis; chorismate biosynthesis; chorismate from D-erythrose 4-phosphate and phosphoenolpyruvate: step 7/7.</text>
</comment>
<comment type="subunit">
    <text evidence="1">Homotetramer.</text>
</comment>
<comment type="similarity">
    <text evidence="1">Belongs to the chorismate synthase family.</text>
</comment>
<name>AROC_LEGPC</name>
<accession>A5IEA1</accession>
<evidence type="ECO:0000255" key="1">
    <source>
        <dbReference type="HAMAP-Rule" id="MF_00300"/>
    </source>
</evidence>
<proteinExistence type="inferred from homology"/>
<reference key="1">
    <citation type="submission" date="2006-11" db="EMBL/GenBank/DDBJ databases">
        <title>Identification and characterization of a new conjugation/ type IVA secretion system (trb/tra) of L. pneumophila Corby localized on a mobile genomic island.</title>
        <authorList>
            <person name="Gloeckner G."/>
            <person name="Albert-Weissenberger C."/>
            <person name="Weinmann E."/>
            <person name="Jacobi S."/>
            <person name="Schunder E."/>
            <person name="Steinert M."/>
            <person name="Buchrieser C."/>
            <person name="Hacker J."/>
            <person name="Heuner K."/>
        </authorList>
    </citation>
    <scope>NUCLEOTIDE SEQUENCE [LARGE SCALE GENOMIC DNA]</scope>
    <source>
        <strain>Corby</strain>
    </source>
</reference>
<organism>
    <name type="scientific">Legionella pneumophila (strain Corby)</name>
    <dbReference type="NCBI Taxonomy" id="400673"/>
    <lineage>
        <taxon>Bacteria</taxon>
        <taxon>Pseudomonadati</taxon>
        <taxon>Pseudomonadota</taxon>
        <taxon>Gammaproteobacteria</taxon>
        <taxon>Legionellales</taxon>
        <taxon>Legionellaceae</taxon>
        <taxon>Legionella</taxon>
    </lineage>
</organism>
<protein>
    <recommendedName>
        <fullName evidence="1">Chorismate synthase</fullName>
        <shortName evidence="1">CS</shortName>
        <ecNumber evidence="1">4.2.3.5</ecNumber>
    </recommendedName>
    <alternativeName>
        <fullName evidence="1">5-enolpyruvylshikimate-3-phosphate phospholyase</fullName>
    </alternativeName>
</protein>
<feature type="chain" id="PRO_1000022505" description="Chorismate synthase">
    <location>
        <begin position="1"/>
        <end position="352"/>
    </location>
</feature>
<feature type="binding site" evidence="1">
    <location>
        <position position="48"/>
    </location>
    <ligand>
        <name>NADP(+)</name>
        <dbReference type="ChEBI" id="CHEBI:58349"/>
    </ligand>
</feature>
<feature type="binding site" evidence="1">
    <location>
        <begin position="125"/>
        <end position="127"/>
    </location>
    <ligand>
        <name>FMN</name>
        <dbReference type="ChEBI" id="CHEBI:58210"/>
    </ligand>
</feature>
<feature type="binding site" evidence="1">
    <location>
        <begin position="238"/>
        <end position="239"/>
    </location>
    <ligand>
        <name>FMN</name>
        <dbReference type="ChEBI" id="CHEBI:58210"/>
    </ligand>
</feature>
<feature type="binding site" evidence="1">
    <location>
        <position position="278"/>
    </location>
    <ligand>
        <name>FMN</name>
        <dbReference type="ChEBI" id="CHEBI:58210"/>
    </ligand>
</feature>
<feature type="binding site" evidence="1">
    <location>
        <begin position="293"/>
        <end position="297"/>
    </location>
    <ligand>
        <name>FMN</name>
        <dbReference type="ChEBI" id="CHEBI:58210"/>
    </ligand>
</feature>
<feature type="binding site" evidence="1">
    <location>
        <position position="319"/>
    </location>
    <ligand>
        <name>FMN</name>
        <dbReference type="ChEBI" id="CHEBI:58210"/>
    </ligand>
</feature>